<dbReference type="EC" id="4.2.1.11" evidence="1"/>
<dbReference type="EMBL" id="CP000857">
    <property type="protein sequence ID" value="ACN47093.1"/>
    <property type="molecule type" value="Genomic_DNA"/>
</dbReference>
<dbReference type="RefSeq" id="WP_000036734.1">
    <property type="nucleotide sequence ID" value="NC_012125.1"/>
</dbReference>
<dbReference type="SMR" id="C0PXD5"/>
<dbReference type="GeneID" id="66757270"/>
<dbReference type="KEGG" id="sei:SPC_3002"/>
<dbReference type="HOGENOM" id="CLU_031223_2_1_6"/>
<dbReference type="UniPathway" id="UPA00109">
    <property type="reaction ID" value="UER00187"/>
</dbReference>
<dbReference type="Proteomes" id="UP000001599">
    <property type="component" value="Chromosome"/>
</dbReference>
<dbReference type="GO" id="GO:0009986">
    <property type="term" value="C:cell surface"/>
    <property type="evidence" value="ECO:0007669"/>
    <property type="project" value="UniProtKB-SubCell"/>
</dbReference>
<dbReference type="GO" id="GO:0005576">
    <property type="term" value="C:extracellular region"/>
    <property type="evidence" value="ECO:0007669"/>
    <property type="project" value="UniProtKB-SubCell"/>
</dbReference>
<dbReference type="GO" id="GO:0000015">
    <property type="term" value="C:phosphopyruvate hydratase complex"/>
    <property type="evidence" value="ECO:0007669"/>
    <property type="project" value="InterPro"/>
</dbReference>
<dbReference type="GO" id="GO:0000287">
    <property type="term" value="F:magnesium ion binding"/>
    <property type="evidence" value="ECO:0007669"/>
    <property type="project" value="UniProtKB-UniRule"/>
</dbReference>
<dbReference type="GO" id="GO:0004634">
    <property type="term" value="F:phosphopyruvate hydratase activity"/>
    <property type="evidence" value="ECO:0007669"/>
    <property type="project" value="UniProtKB-UniRule"/>
</dbReference>
<dbReference type="GO" id="GO:0006096">
    <property type="term" value="P:glycolytic process"/>
    <property type="evidence" value="ECO:0007669"/>
    <property type="project" value="UniProtKB-UniRule"/>
</dbReference>
<dbReference type="CDD" id="cd03313">
    <property type="entry name" value="enolase"/>
    <property type="match status" value="1"/>
</dbReference>
<dbReference type="FunFam" id="3.20.20.120:FF:000001">
    <property type="entry name" value="Enolase"/>
    <property type="match status" value="1"/>
</dbReference>
<dbReference type="FunFam" id="3.30.390.10:FF:000001">
    <property type="entry name" value="Enolase"/>
    <property type="match status" value="1"/>
</dbReference>
<dbReference type="Gene3D" id="3.20.20.120">
    <property type="entry name" value="Enolase-like C-terminal domain"/>
    <property type="match status" value="1"/>
</dbReference>
<dbReference type="Gene3D" id="3.30.390.10">
    <property type="entry name" value="Enolase-like, N-terminal domain"/>
    <property type="match status" value="1"/>
</dbReference>
<dbReference type="HAMAP" id="MF_00318">
    <property type="entry name" value="Enolase"/>
    <property type="match status" value="1"/>
</dbReference>
<dbReference type="InterPro" id="IPR000941">
    <property type="entry name" value="Enolase"/>
</dbReference>
<dbReference type="InterPro" id="IPR036849">
    <property type="entry name" value="Enolase-like_C_sf"/>
</dbReference>
<dbReference type="InterPro" id="IPR029017">
    <property type="entry name" value="Enolase-like_N"/>
</dbReference>
<dbReference type="InterPro" id="IPR020810">
    <property type="entry name" value="Enolase_C"/>
</dbReference>
<dbReference type="InterPro" id="IPR020809">
    <property type="entry name" value="Enolase_CS"/>
</dbReference>
<dbReference type="InterPro" id="IPR020811">
    <property type="entry name" value="Enolase_N"/>
</dbReference>
<dbReference type="NCBIfam" id="TIGR01060">
    <property type="entry name" value="eno"/>
    <property type="match status" value="1"/>
</dbReference>
<dbReference type="PANTHER" id="PTHR11902">
    <property type="entry name" value="ENOLASE"/>
    <property type="match status" value="1"/>
</dbReference>
<dbReference type="PANTHER" id="PTHR11902:SF1">
    <property type="entry name" value="ENOLASE"/>
    <property type="match status" value="1"/>
</dbReference>
<dbReference type="Pfam" id="PF00113">
    <property type="entry name" value="Enolase_C"/>
    <property type="match status" value="1"/>
</dbReference>
<dbReference type="Pfam" id="PF03952">
    <property type="entry name" value="Enolase_N"/>
    <property type="match status" value="1"/>
</dbReference>
<dbReference type="PIRSF" id="PIRSF001400">
    <property type="entry name" value="Enolase"/>
    <property type="match status" value="1"/>
</dbReference>
<dbReference type="PRINTS" id="PR00148">
    <property type="entry name" value="ENOLASE"/>
</dbReference>
<dbReference type="SFLD" id="SFLDF00002">
    <property type="entry name" value="enolase"/>
    <property type="match status" value="1"/>
</dbReference>
<dbReference type="SFLD" id="SFLDG00178">
    <property type="entry name" value="enolase"/>
    <property type="match status" value="1"/>
</dbReference>
<dbReference type="SMART" id="SM01192">
    <property type="entry name" value="Enolase_C"/>
    <property type="match status" value="1"/>
</dbReference>
<dbReference type="SMART" id="SM01193">
    <property type="entry name" value="Enolase_N"/>
    <property type="match status" value="1"/>
</dbReference>
<dbReference type="SUPFAM" id="SSF51604">
    <property type="entry name" value="Enolase C-terminal domain-like"/>
    <property type="match status" value="1"/>
</dbReference>
<dbReference type="SUPFAM" id="SSF54826">
    <property type="entry name" value="Enolase N-terminal domain-like"/>
    <property type="match status" value="1"/>
</dbReference>
<dbReference type="PROSITE" id="PS00164">
    <property type="entry name" value="ENOLASE"/>
    <property type="match status" value="1"/>
</dbReference>
<proteinExistence type="inferred from homology"/>
<accession>C0PXD5</accession>
<reference key="1">
    <citation type="journal article" date="2009" name="PLoS ONE">
        <title>Salmonella paratyphi C: genetic divergence from Salmonella choleraesuis and pathogenic convergence with Salmonella typhi.</title>
        <authorList>
            <person name="Liu W.-Q."/>
            <person name="Feng Y."/>
            <person name="Wang Y."/>
            <person name="Zou Q.-H."/>
            <person name="Chen F."/>
            <person name="Guo J.-T."/>
            <person name="Peng Y.-H."/>
            <person name="Jin Y."/>
            <person name="Li Y.-G."/>
            <person name="Hu S.-N."/>
            <person name="Johnston R.N."/>
            <person name="Liu G.-R."/>
            <person name="Liu S.-L."/>
        </authorList>
    </citation>
    <scope>NUCLEOTIDE SEQUENCE [LARGE SCALE GENOMIC DNA]</scope>
    <source>
        <strain>RKS4594</strain>
    </source>
</reference>
<feature type="chain" id="PRO_1000133018" description="Enolase">
    <location>
        <begin position="1"/>
        <end position="432"/>
    </location>
</feature>
<feature type="active site" description="Proton donor" evidence="1">
    <location>
        <position position="209"/>
    </location>
</feature>
<feature type="active site" description="Proton acceptor" evidence="1">
    <location>
        <position position="342"/>
    </location>
</feature>
<feature type="binding site" evidence="1">
    <location>
        <position position="167"/>
    </location>
    <ligand>
        <name>(2R)-2-phosphoglycerate</name>
        <dbReference type="ChEBI" id="CHEBI:58289"/>
    </ligand>
</feature>
<feature type="binding site" evidence="1">
    <location>
        <position position="246"/>
    </location>
    <ligand>
        <name>Mg(2+)</name>
        <dbReference type="ChEBI" id="CHEBI:18420"/>
    </ligand>
</feature>
<feature type="binding site" evidence="1">
    <location>
        <position position="290"/>
    </location>
    <ligand>
        <name>Mg(2+)</name>
        <dbReference type="ChEBI" id="CHEBI:18420"/>
    </ligand>
</feature>
<feature type="binding site" evidence="1">
    <location>
        <position position="317"/>
    </location>
    <ligand>
        <name>Mg(2+)</name>
        <dbReference type="ChEBI" id="CHEBI:18420"/>
    </ligand>
</feature>
<feature type="binding site" evidence="1">
    <location>
        <position position="342"/>
    </location>
    <ligand>
        <name>(2R)-2-phosphoglycerate</name>
        <dbReference type="ChEBI" id="CHEBI:58289"/>
    </ligand>
</feature>
<feature type="binding site" evidence="1">
    <location>
        <position position="371"/>
    </location>
    <ligand>
        <name>(2R)-2-phosphoglycerate</name>
        <dbReference type="ChEBI" id="CHEBI:58289"/>
    </ligand>
</feature>
<feature type="binding site" evidence="1">
    <location>
        <position position="372"/>
    </location>
    <ligand>
        <name>(2R)-2-phosphoglycerate</name>
        <dbReference type="ChEBI" id="CHEBI:58289"/>
    </ligand>
</feature>
<feature type="binding site" evidence="1">
    <location>
        <position position="393"/>
    </location>
    <ligand>
        <name>(2R)-2-phosphoglycerate</name>
        <dbReference type="ChEBI" id="CHEBI:58289"/>
    </ligand>
</feature>
<organism>
    <name type="scientific">Salmonella paratyphi C (strain RKS4594)</name>
    <dbReference type="NCBI Taxonomy" id="476213"/>
    <lineage>
        <taxon>Bacteria</taxon>
        <taxon>Pseudomonadati</taxon>
        <taxon>Pseudomonadota</taxon>
        <taxon>Gammaproteobacteria</taxon>
        <taxon>Enterobacterales</taxon>
        <taxon>Enterobacteriaceae</taxon>
        <taxon>Salmonella</taxon>
    </lineage>
</organism>
<gene>
    <name evidence="1" type="primary">eno</name>
    <name type="ordered locus">SPC_3002</name>
</gene>
<protein>
    <recommendedName>
        <fullName evidence="1">Enolase</fullName>
        <ecNumber evidence="1">4.2.1.11</ecNumber>
    </recommendedName>
    <alternativeName>
        <fullName evidence="1">2-phospho-D-glycerate hydro-lyase</fullName>
    </alternativeName>
    <alternativeName>
        <fullName evidence="1">2-phosphoglycerate dehydratase</fullName>
    </alternativeName>
</protein>
<comment type="function">
    <text evidence="1">Catalyzes the reversible conversion of 2-phosphoglycerate (2-PG) into phosphoenolpyruvate (PEP). It is essential for the degradation of carbohydrates via glycolysis.</text>
</comment>
<comment type="catalytic activity">
    <reaction evidence="1">
        <text>(2R)-2-phosphoglycerate = phosphoenolpyruvate + H2O</text>
        <dbReference type="Rhea" id="RHEA:10164"/>
        <dbReference type="ChEBI" id="CHEBI:15377"/>
        <dbReference type="ChEBI" id="CHEBI:58289"/>
        <dbReference type="ChEBI" id="CHEBI:58702"/>
        <dbReference type="EC" id="4.2.1.11"/>
    </reaction>
</comment>
<comment type="cofactor">
    <cofactor evidence="1">
        <name>Mg(2+)</name>
        <dbReference type="ChEBI" id="CHEBI:18420"/>
    </cofactor>
    <text evidence="1">Binds a second Mg(2+) ion via substrate during catalysis.</text>
</comment>
<comment type="pathway">
    <text evidence="1">Carbohydrate degradation; glycolysis; pyruvate from D-glyceraldehyde 3-phosphate: step 4/5.</text>
</comment>
<comment type="subunit">
    <text evidence="1">Component of the RNA degradosome, a multiprotein complex involved in RNA processing and mRNA degradation.</text>
</comment>
<comment type="subcellular location">
    <subcellularLocation>
        <location evidence="1">Cytoplasm</location>
    </subcellularLocation>
    <subcellularLocation>
        <location evidence="1">Secreted</location>
    </subcellularLocation>
    <subcellularLocation>
        <location evidence="1">Cell surface</location>
    </subcellularLocation>
    <text evidence="1">Fractions of enolase are present in both the cytoplasm and on the cell surface.</text>
</comment>
<comment type="similarity">
    <text evidence="1">Belongs to the enolase family.</text>
</comment>
<sequence length="432" mass="45599">MSKIVKVIGREIIDSRGNPTVEAEVHLEGGFVGMAAAPSGASTGSREALELRDGDKSRFLGKGVTKAVGAVNGPIAQAILGKDAKDQAGIDKIMIDLDGTENKSNFGANAILAVSLANAKAAAAAKGMPLYEHIAELNGTPGKYSMPVPMMNIINGGEHADNNVDIQEFMIQPVGAKTVKEAIRMGSEVFHHLAKVLKGKGMNTAVGDEGGYAPNLGSNAEALAVIAEAVKAAGYELGKDITLAMDCAASEFYKDGKYVLAGEGNKAFTSEEFTHFLEELTKQYPIVSIEDGLDESDWDGFAYQTKVLGDKIQLVGDDLFVTNTKILKEGIEKGIANSILIKFNQIGSLTETLAAIKMAKDAGYTAVISHRSGETEDATIADLAVGTAAGQIKTGSMSRSDRVAKYNQLIRIEEALGEKAPYNGRKEIKGQA</sequence>
<name>ENO_SALPC</name>
<keyword id="KW-0963">Cytoplasm</keyword>
<keyword id="KW-0324">Glycolysis</keyword>
<keyword id="KW-0456">Lyase</keyword>
<keyword id="KW-0460">Magnesium</keyword>
<keyword id="KW-0479">Metal-binding</keyword>
<keyword id="KW-0964">Secreted</keyword>
<evidence type="ECO:0000255" key="1">
    <source>
        <dbReference type="HAMAP-Rule" id="MF_00318"/>
    </source>
</evidence>